<protein>
    <recommendedName>
        <fullName>Transgelin-2</fullName>
    </recommendedName>
    <alternativeName>
        <fullName>SM22-beta</fullName>
    </alternativeName>
</protein>
<sequence>MANRGPSYGLSREVQQKIEKQYDADLEQILIQWITTQCREDVGQPQPGRENFQKWLKDGTVLCKLINSLYPEGQAPVKKIQASSMAFKQMEQISQFLQAAERYGINTTDIFQTVDLWEGKNMACVQRTLMNLGGLAVARDDGLFSGDPNWFPKKSKENPRNFSDNQLQEGKNVIGLQMGTNRGASQAGMTGYGMPRQIL</sequence>
<accession>Q9WVA4</accession>
<accession>Q3TIB8</accession>
<accession>Q6A0C6</accession>
<accession>Q78ZX2</accession>
<accession>Q91VU2</accession>
<dbReference type="EMBL" id="AF465519">
    <property type="protein sequence ID" value="AAM54133.1"/>
    <property type="molecule type" value="mRNA"/>
</dbReference>
<dbReference type="EMBL" id="AF149291">
    <property type="protein sequence ID" value="AAD37787.1"/>
    <property type="molecule type" value="mRNA"/>
</dbReference>
<dbReference type="EMBL" id="AK172892">
    <property type="protein sequence ID" value="BAD32170.1"/>
    <property type="status" value="ALT_INIT"/>
    <property type="molecule type" value="mRNA"/>
</dbReference>
<dbReference type="EMBL" id="AK151576">
    <property type="protein sequence ID" value="BAE30516.1"/>
    <property type="molecule type" value="mRNA"/>
</dbReference>
<dbReference type="EMBL" id="AK167395">
    <property type="protein sequence ID" value="BAE39484.1"/>
    <property type="molecule type" value="mRNA"/>
</dbReference>
<dbReference type="EMBL" id="AK167922">
    <property type="protein sequence ID" value="BAE39928.1"/>
    <property type="molecule type" value="mRNA"/>
</dbReference>
<dbReference type="EMBL" id="AK171088">
    <property type="protein sequence ID" value="BAE42241.1"/>
    <property type="molecule type" value="mRNA"/>
</dbReference>
<dbReference type="EMBL" id="CH466520">
    <property type="protein sequence ID" value="EDL39010.1"/>
    <property type="molecule type" value="Genomic_DNA"/>
</dbReference>
<dbReference type="EMBL" id="BC009076">
    <property type="protein sequence ID" value="AAH09076.1"/>
    <property type="molecule type" value="mRNA"/>
</dbReference>
<dbReference type="EMBL" id="BC049861">
    <property type="protein sequence ID" value="AAH49861.1"/>
    <property type="molecule type" value="mRNA"/>
</dbReference>
<dbReference type="CCDS" id="CCDS35784.1"/>
<dbReference type="RefSeq" id="NP_848713.1">
    <property type="nucleotide sequence ID" value="NM_178598.2"/>
</dbReference>
<dbReference type="SMR" id="Q9WVA4"/>
<dbReference type="BioGRID" id="203961">
    <property type="interactions" value="8"/>
</dbReference>
<dbReference type="FunCoup" id="Q9WVA4">
    <property type="interactions" value="770"/>
</dbReference>
<dbReference type="IntAct" id="Q9WVA4">
    <property type="interactions" value="2"/>
</dbReference>
<dbReference type="MINT" id="Q9WVA4"/>
<dbReference type="STRING" id="10090.ENSMUSP00000106861"/>
<dbReference type="GlyGen" id="Q9WVA4">
    <property type="glycosylation" value="2 sites, 1 N-linked glycan (1 site), 1 O-linked glycan (1 site)"/>
</dbReference>
<dbReference type="iPTMnet" id="Q9WVA4"/>
<dbReference type="MetOSite" id="Q9WVA4"/>
<dbReference type="PhosphoSitePlus" id="Q9WVA4"/>
<dbReference type="SwissPalm" id="Q9WVA4"/>
<dbReference type="CPTAC" id="non-CPTAC-3617"/>
<dbReference type="jPOST" id="Q9WVA4"/>
<dbReference type="PaxDb" id="10090-ENSMUSP00000106861"/>
<dbReference type="PeptideAtlas" id="Q9WVA4"/>
<dbReference type="ProteomicsDB" id="262927"/>
<dbReference type="Pumba" id="Q9WVA4"/>
<dbReference type="Antibodypedia" id="1099">
    <property type="antibodies" value="247 antibodies from 31 providers"/>
</dbReference>
<dbReference type="DNASU" id="21346"/>
<dbReference type="Ensembl" id="ENSMUST00000111228.2">
    <property type="protein sequence ID" value="ENSMUSP00000106859.2"/>
    <property type="gene ID" value="ENSMUSG00000026547.16"/>
</dbReference>
<dbReference type="Ensembl" id="ENSMUST00000111230.8">
    <property type="protein sequence ID" value="ENSMUSP00000106861.2"/>
    <property type="gene ID" value="ENSMUSG00000026547.16"/>
</dbReference>
<dbReference type="GeneID" id="21346"/>
<dbReference type="KEGG" id="mmu:21346"/>
<dbReference type="UCSC" id="uc007dqp.1">
    <property type="organism name" value="mouse"/>
</dbReference>
<dbReference type="AGR" id="MGI:1312985"/>
<dbReference type="CTD" id="8407"/>
<dbReference type="MGI" id="MGI:1312985">
    <property type="gene designation" value="Tagln2"/>
</dbReference>
<dbReference type="VEuPathDB" id="HostDB:ENSMUSG00000026547"/>
<dbReference type="eggNOG" id="KOG2046">
    <property type="taxonomic scope" value="Eukaryota"/>
</dbReference>
<dbReference type="GeneTree" id="ENSGT00940000158886"/>
<dbReference type="HOGENOM" id="CLU_055232_1_0_1"/>
<dbReference type="InParanoid" id="Q9WVA4"/>
<dbReference type="OMA" id="WIKTITG"/>
<dbReference type="OrthoDB" id="21595at2759"/>
<dbReference type="PhylomeDB" id="Q9WVA4"/>
<dbReference type="TreeFam" id="TF313921"/>
<dbReference type="Reactome" id="R-MMU-114608">
    <property type="pathway name" value="Platelet degranulation"/>
</dbReference>
<dbReference type="BioGRID-ORCS" id="21346">
    <property type="hits" value="2 hits in 79 CRISPR screens"/>
</dbReference>
<dbReference type="ChiTaRS" id="Tagln2">
    <property type="organism name" value="mouse"/>
</dbReference>
<dbReference type="PRO" id="PR:Q9WVA4"/>
<dbReference type="Proteomes" id="UP000000589">
    <property type="component" value="Chromosome 1"/>
</dbReference>
<dbReference type="RNAct" id="Q9WVA4">
    <property type="molecule type" value="protein"/>
</dbReference>
<dbReference type="Bgee" id="ENSMUSG00000026547">
    <property type="expression patterns" value="Expressed in pyloric antrum and 244 other cell types or tissues"/>
</dbReference>
<dbReference type="ExpressionAtlas" id="Q9WVA4">
    <property type="expression patterns" value="baseline and differential"/>
</dbReference>
<dbReference type="GO" id="GO:0030855">
    <property type="term" value="P:epithelial cell differentiation"/>
    <property type="evidence" value="ECO:0007669"/>
    <property type="project" value="Ensembl"/>
</dbReference>
<dbReference type="CDD" id="cd21280">
    <property type="entry name" value="CH_TAGLN2"/>
    <property type="match status" value="1"/>
</dbReference>
<dbReference type="FunFam" id="1.10.418.10:FF:000039">
    <property type="entry name" value="Transgelin"/>
    <property type="match status" value="1"/>
</dbReference>
<dbReference type="Gene3D" id="1.10.418.10">
    <property type="entry name" value="Calponin-like domain"/>
    <property type="match status" value="1"/>
</dbReference>
<dbReference type="InterPro" id="IPR050606">
    <property type="entry name" value="Calponin-like"/>
</dbReference>
<dbReference type="InterPro" id="IPR000557">
    <property type="entry name" value="Calponin_repeat"/>
</dbReference>
<dbReference type="InterPro" id="IPR001715">
    <property type="entry name" value="CH_dom"/>
</dbReference>
<dbReference type="InterPro" id="IPR036872">
    <property type="entry name" value="CH_dom_sf"/>
</dbReference>
<dbReference type="InterPro" id="IPR003096">
    <property type="entry name" value="SM22_calponin"/>
</dbReference>
<dbReference type="PANTHER" id="PTHR47385">
    <property type="entry name" value="CALPONIN"/>
    <property type="match status" value="1"/>
</dbReference>
<dbReference type="PANTHER" id="PTHR47385:SF20">
    <property type="entry name" value="TRANSGELIN-2"/>
    <property type="match status" value="1"/>
</dbReference>
<dbReference type="Pfam" id="PF00402">
    <property type="entry name" value="Calponin"/>
    <property type="match status" value="1"/>
</dbReference>
<dbReference type="Pfam" id="PF00307">
    <property type="entry name" value="CH"/>
    <property type="match status" value="1"/>
</dbReference>
<dbReference type="PRINTS" id="PR00888">
    <property type="entry name" value="SM22CALPONIN"/>
</dbReference>
<dbReference type="PRINTS" id="PR00890">
    <property type="entry name" value="TRANSGELIN"/>
</dbReference>
<dbReference type="SMART" id="SM00033">
    <property type="entry name" value="CH"/>
    <property type="match status" value="1"/>
</dbReference>
<dbReference type="SUPFAM" id="SSF47576">
    <property type="entry name" value="Calponin-homology domain, CH-domain"/>
    <property type="match status" value="1"/>
</dbReference>
<dbReference type="PROSITE" id="PS01052">
    <property type="entry name" value="CALPONIN_1"/>
    <property type="match status" value="1"/>
</dbReference>
<dbReference type="PROSITE" id="PS51122">
    <property type="entry name" value="CALPONIN_2"/>
    <property type="match status" value="1"/>
</dbReference>
<dbReference type="PROSITE" id="PS50021">
    <property type="entry name" value="CH"/>
    <property type="match status" value="1"/>
</dbReference>
<name>TAGL2_MOUSE</name>
<feature type="initiator methionine" description="Removed" evidence="1">
    <location>
        <position position="1"/>
    </location>
</feature>
<feature type="chain" id="PRO_0000204787" description="Transgelin-2">
    <location>
        <begin position="2"/>
        <end position="199"/>
    </location>
</feature>
<feature type="domain" description="Calponin-homology (CH)" evidence="2">
    <location>
        <begin position="24"/>
        <end position="136"/>
    </location>
</feature>
<feature type="repeat" description="Calponin-like">
    <location>
        <begin position="174"/>
        <end position="199"/>
    </location>
</feature>
<feature type="modified residue" description="N-acetylalanine" evidence="1">
    <location>
        <position position="2"/>
    </location>
</feature>
<feature type="modified residue" description="Phosphoserine" evidence="1">
    <location>
        <position position="11"/>
    </location>
</feature>
<feature type="modified residue" description="N6-acetyllysine" evidence="1">
    <location>
        <position position="17"/>
    </location>
</feature>
<feature type="modified residue" description="N6-acetyllysine" evidence="1">
    <location>
        <position position="20"/>
    </location>
</feature>
<feature type="modified residue" description="Phosphoserine" evidence="4 5">
    <location>
        <position position="163"/>
    </location>
</feature>
<feature type="modified residue" description="Phosphothreonine" evidence="5">
    <location>
        <position position="180"/>
    </location>
</feature>
<feature type="modified residue" description="Omega-N-methylarginine" evidence="6">
    <location>
        <position position="182"/>
    </location>
</feature>
<feature type="modified residue" description="Omega-N-methylarginine" evidence="1">
    <location>
        <position position="196"/>
    </location>
</feature>
<feature type="cross-link" description="Glycyl lysine isopeptide (Lys-Gly) (interchain with G-Cter in SUMO2)" evidence="1">
    <location>
        <position position="171"/>
    </location>
</feature>
<feature type="sequence conflict" description="In Ref. 4; BAE39928." evidence="3" ref="4">
    <original>Q</original>
    <variation>K</variation>
    <location>
        <position position="46"/>
    </location>
</feature>
<feature type="sequence conflict" description="In Ref. 2; AAD37787." evidence="3" ref="2">
    <original>YGMPRQIL</original>
    <variation>MGCHGDPLIILSLLPLPSMNG</variation>
    <location>
        <begin position="192"/>
        <end position="199"/>
    </location>
</feature>
<proteinExistence type="evidence at protein level"/>
<organism>
    <name type="scientific">Mus musculus</name>
    <name type="common">Mouse</name>
    <dbReference type="NCBI Taxonomy" id="10090"/>
    <lineage>
        <taxon>Eukaryota</taxon>
        <taxon>Metazoa</taxon>
        <taxon>Chordata</taxon>
        <taxon>Craniata</taxon>
        <taxon>Vertebrata</taxon>
        <taxon>Euteleostomi</taxon>
        <taxon>Mammalia</taxon>
        <taxon>Eutheria</taxon>
        <taxon>Euarchontoglires</taxon>
        <taxon>Glires</taxon>
        <taxon>Rodentia</taxon>
        <taxon>Myomorpha</taxon>
        <taxon>Muroidea</taxon>
        <taxon>Muridae</taxon>
        <taxon>Murinae</taxon>
        <taxon>Mus</taxon>
        <taxon>Mus</taxon>
    </lineage>
</organism>
<comment type="similarity">
    <text evidence="3">Belongs to the calponin family.</text>
</comment>
<comment type="sequence caution" evidence="3">
    <conflict type="erroneous initiation">
        <sequence resource="EMBL-CDS" id="BAD32170"/>
    </conflict>
</comment>
<evidence type="ECO:0000250" key="1">
    <source>
        <dbReference type="UniProtKB" id="P37802"/>
    </source>
</evidence>
<evidence type="ECO:0000255" key="2">
    <source>
        <dbReference type="PROSITE-ProRule" id="PRU00044"/>
    </source>
</evidence>
<evidence type="ECO:0000305" key="3"/>
<evidence type="ECO:0007744" key="4">
    <source>
    </source>
</evidence>
<evidence type="ECO:0007744" key="5">
    <source>
    </source>
</evidence>
<evidence type="ECO:0007744" key="6">
    <source>
    </source>
</evidence>
<gene>
    <name type="primary">Tagln2</name>
    <name type="synonym">Kiaa0120</name>
</gene>
<reference key="1">
    <citation type="journal article" date="2002" name="Mech. Dev.">
        <title>SM22beta encodes a lineage-restricted cytoskeletal protein with a unique developmentally regulated pattern of expression.</title>
        <authorList>
            <person name="Zhang J.C.L."/>
            <person name="Helmke B.P."/>
            <person name="Shum A."/>
            <person name="Du K."/>
            <person name="Yu W.W."/>
            <person name="Lu M.M."/>
            <person name="Davies P.F."/>
            <person name="Parmacek M.S."/>
        </authorList>
    </citation>
    <scope>NUCLEOTIDE SEQUENCE [MRNA]</scope>
    <source>
        <strain>BALB/cJ</strain>
        <tissue>Heart</tissue>
    </source>
</reference>
<reference key="2">
    <citation type="submission" date="1999-05" db="EMBL/GenBank/DDBJ databases">
        <title>Molecular cloning of mouse transgelin gene.</title>
        <authorList>
            <person name="Jin C.G."/>
            <person name="Chen W.F."/>
            <person name="Li Y."/>
            <person name="Zhang J."/>
            <person name="Qian X.P."/>
        </authorList>
    </citation>
    <scope>NUCLEOTIDE SEQUENCE [MRNA]</scope>
    <source>
        <strain>BALB/cJ</strain>
        <tissue>Thymus</tissue>
    </source>
</reference>
<reference key="3">
    <citation type="journal article" date="2004" name="DNA Res.">
        <title>Prediction of the coding sequences of mouse homologues of KIAA gene: IV. The complete nucleotide sequences of 500 mouse KIAA-homologous cDNAs identified by screening of terminal sequences of cDNA clones randomly sampled from size-fractionated libraries.</title>
        <authorList>
            <person name="Okazaki N."/>
            <person name="Kikuno R."/>
            <person name="Ohara R."/>
            <person name="Inamoto S."/>
            <person name="Koseki H."/>
            <person name="Hiraoka S."/>
            <person name="Saga Y."/>
            <person name="Seino S."/>
            <person name="Nishimura M."/>
            <person name="Kaisho T."/>
            <person name="Hoshino K."/>
            <person name="Kitamura H."/>
            <person name="Nagase T."/>
            <person name="Ohara O."/>
            <person name="Koga H."/>
        </authorList>
    </citation>
    <scope>NUCLEOTIDE SEQUENCE [LARGE SCALE MRNA]</scope>
    <source>
        <tissue>Pancreatic islet</tissue>
    </source>
</reference>
<reference key="4">
    <citation type="journal article" date="2005" name="Science">
        <title>The transcriptional landscape of the mammalian genome.</title>
        <authorList>
            <person name="Carninci P."/>
            <person name="Kasukawa T."/>
            <person name="Katayama S."/>
            <person name="Gough J."/>
            <person name="Frith M.C."/>
            <person name="Maeda N."/>
            <person name="Oyama R."/>
            <person name="Ravasi T."/>
            <person name="Lenhard B."/>
            <person name="Wells C."/>
            <person name="Kodzius R."/>
            <person name="Shimokawa K."/>
            <person name="Bajic V.B."/>
            <person name="Brenner S.E."/>
            <person name="Batalov S."/>
            <person name="Forrest A.R."/>
            <person name="Zavolan M."/>
            <person name="Davis M.J."/>
            <person name="Wilming L.G."/>
            <person name="Aidinis V."/>
            <person name="Allen J.E."/>
            <person name="Ambesi-Impiombato A."/>
            <person name="Apweiler R."/>
            <person name="Aturaliya R.N."/>
            <person name="Bailey T.L."/>
            <person name="Bansal M."/>
            <person name="Baxter L."/>
            <person name="Beisel K.W."/>
            <person name="Bersano T."/>
            <person name="Bono H."/>
            <person name="Chalk A.M."/>
            <person name="Chiu K.P."/>
            <person name="Choudhary V."/>
            <person name="Christoffels A."/>
            <person name="Clutterbuck D.R."/>
            <person name="Crowe M.L."/>
            <person name="Dalla E."/>
            <person name="Dalrymple B.P."/>
            <person name="de Bono B."/>
            <person name="Della Gatta G."/>
            <person name="di Bernardo D."/>
            <person name="Down T."/>
            <person name="Engstrom P."/>
            <person name="Fagiolini M."/>
            <person name="Faulkner G."/>
            <person name="Fletcher C.F."/>
            <person name="Fukushima T."/>
            <person name="Furuno M."/>
            <person name="Futaki S."/>
            <person name="Gariboldi M."/>
            <person name="Georgii-Hemming P."/>
            <person name="Gingeras T.R."/>
            <person name="Gojobori T."/>
            <person name="Green R.E."/>
            <person name="Gustincich S."/>
            <person name="Harbers M."/>
            <person name="Hayashi Y."/>
            <person name="Hensch T.K."/>
            <person name="Hirokawa N."/>
            <person name="Hill D."/>
            <person name="Huminiecki L."/>
            <person name="Iacono M."/>
            <person name="Ikeo K."/>
            <person name="Iwama A."/>
            <person name="Ishikawa T."/>
            <person name="Jakt M."/>
            <person name="Kanapin A."/>
            <person name="Katoh M."/>
            <person name="Kawasawa Y."/>
            <person name="Kelso J."/>
            <person name="Kitamura H."/>
            <person name="Kitano H."/>
            <person name="Kollias G."/>
            <person name="Krishnan S.P."/>
            <person name="Kruger A."/>
            <person name="Kummerfeld S.K."/>
            <person name="Kurochkin I.V."/>
            <person name="Lareau L.F."/>
            <person name="Lazarevic D."/>
            <person name="Lipovich L."/>
            <person name="Liu J."/>
            <person name="Liuni S."/>
            <person name="McWilliam S."/>
            <person name="Madan Babu M."/>
            <person name="Madera M."/>
            <person name="Marchionni L."/>
            <person name="Matsuda H."/>
            <person name="Matsuzawa S."/>
            <person name="Miki H."/>
            <person name="Mignone F."/>
            <person name="Miyake S."/>
            <person name="Morris K."/>
            <person name="Mottagui-Tabar S."/>
            <person name="Mulder N."/>
            <person name="Nakano N."/>
            <person name="Nakauchi H."/>
            <person name="Ng P."/>
            <person name="Nilsson R."/>
            <person name="Nishiguchi S."/>
            <person name="Nishikawa S."/>
            <person name="Nori F."/>
            <person name="Ohara O."/>
            <person name="Okazaki Y."/>
            <person name="Orlando V."/>
            <person name="Pang K.C."/>
            <person name="Pavan W.J."/>
            <person name="Pavesi G."/>
            <person name="Pesole G."/>
            <person name="Petrovsky N."/>
            <person name="Piazza S."/>
            <person name="Reed J."/>
            <person name="Reid J.F."/>
            <person name="Ring B.Z."/>
            <person name="Ringwald M."/>
            <person name="Rost B."/>
            <person name="Ruan Y."/>
            <person name="Salzberg S.L."/>
            <person name="Sandelin A."/>
            <person name="Schneider C."/>
            <person name="Schoenbach C."/>
            <person name="Sekiguchi K."/>
            <person name="Semple C.A."/>
            <person name="Seno S."/>
            <person name="Sessa L."/>
            <person name="Sheng Y."/>
            <person name="Shibata Y."/>
            <person name="Shimada H."/>
            <person name="Shimada K."/>
            <person name="Silva D."/>
            <person name="Sinclair B."/>
            <person name="Sperling S."/>
            <person name="Stupka E."/>
            <person name="Sugiura K."/>
            <person name="Sultana R."/>
            <person name="Takenaka Y."/>
            <person name="Taki K."/>
            <person name="Tammoja K."/>
            <person name="Tan S.L."/>
            <person name="Tang S."/>
            <person name="Taylor M.S."/>
            <person name="Tegner J."/>
            <person name="Teichmann S.A."/>
            <person name="Ueda H.R."/>
            <person name="van Nimwegen E."/>
            <person name="Verardo R."/>
            <person name="Wei C.L."/>
            <person name="Yagi K."/>
            <person name="Yamanishi H."/>
            <person name="Zabarovsky E."/>
            <person name="Zhu S."/>
            <person name="Zimmer A."/>
            <person name="Hide W."/>
            <person name="Bult C."/>
            <person name="Grimmond S.M."/>
            <person name="Teasdale R.D."/>
            <person name="Liu E.T."/>
            <person name="Brusic V."/>
            <person name="Quackenbush J."/>
            <person name="Wahlestedt C."/>
            <person name="Mattick J.S."/>
            <person name="Hume D.A."/>
            <person name="Kai C."/>
            <person name="Sasaki D."/>
            <person name="Tomaru Y."/>
            <person name="Fukuda S."/>
            <person name="Kanamori-Katayama M."/>
            <person name="Suzuki M."/>
            <person name="Aoki J."/>
            <person name="Arakawa T."/>
            <person name="Iida J."/>
            <person name="Imamura K."/>
            <person name="Itoh M."/>
            <person name="Kato T."/>
            <person name="Kawaji H."/>
            <person name="Kawagashira N."/>
            <person name="Kawashima T."/>
            <person name="Kojima M."/>
            <person name="Kondo S."/>
            <person name="Konno H."/>
            <person name="Nakano K."/>
            <person name="Ninomiya N."/>
            <person name="Nishio T."/>
            <person name="Okada M."/>
            <person name="Plessy C."/>
            <person name="Shibata K."/>
            <person name="Shiraki T."/>
            <person name="Suzuki S."/>
            <person name="Tagami M."/>
            <person name="Waki K."/>
            <person name="Watahiki A."/>
            <person name="Okamura-Oho Y."/>
            <person name="Suzuki H."/>
            <person name="Kawai J."/>
            <person name="Hayashizaki Y."/>
        </authorList>
    </citation>
    <scope>NUCLEOTIDE SEQUENCE [LARGE SCALE MRNA]</scope>
    <source>
        <strain>BALB/cJ</strain>
        <strain>C57BL/6J</strain>
        <strain>NOD</strain>
        <tissue>Bone marrow</tissue>
        <tissue>Placenta</tissue>
    </source>
</reference>
<reference key="5">
    <citation type="submission" date="2005-09" db="EMBL/GenBank/DDBJ databases">
        <authorList>
            <person name="Mural R.J."/>
            <person name="Adams M.D."/>
            <person name="Myers E.W."/>
            <person name="Smith H.O."/>
            <person name="Venter J.C."/>
        </authorList>
    </citation>
    <scope>NUCLEOTIDE SEQUENCE [LARGE SCALE GENOMIC DNA]</scope>
</reference>
<reference key="6">
    <citation type="journal article" date="2004" name="Genome Res.">
        <title>The status, quality, and expansion of the NIH full-length cDNA project: the Mammalian Gene Collection (MGC).</title>
        <authorList>
            <consortium name="The MGC Project Team"/>
        </authorList>
    </citation>
    <scope>NUCLEOTIDE SEQUENCE [LARGE SCALE MRNA]</scope>
    <source>
        <strain>FVB/N</strain>
        <strain>NMRI</strain>
        <tissue>Colon</tissue>
        <tissue>Mammary tumor</tissue>
    </source>
</reference>
<reference key="7">
    <citation type="submission" date="2007-07" db="UniProtKB">
        <authorList>
            <person name="Lubec G."/>
            <person name="Yang J.W."/>
            <person name="Zigmond M."/>
        </authorList>
    </citation>
    <scope>PROTEIN SEQUENCE OF 140-153</scope>
    <source>
        <tissue>Brain</tissue>
    </source>
</reference>
<reference key="8">
    <citation type="journal article" date="2007" name="Proc. Natl. Acad. Sci. U.S.A.">
        <title>Large-scale phosphorylation analysis of mouse liver.</title>
        <authorList>
            <person name="Villen J."/>
            <person name="Beausoleil S.A."/>
            <person name="Gerber S.A."/>
            <person name="Gygi S.P."/>
        </authorList>
    </citation>
    <scope>PHOSPHORYLATION [LARGE SCALE ANALYSIS] AT SER-163</scope>
    <scope>IDENTIFICATION BY MASS SPECTROMETRY [LARGE SCALE ANALYSIS]</scope>
    <source>
        <tissue>Liver</tissue>
    </source>
</reference>
<reference key="9">
    <citation type="journal article" date="2010" name="Cell">
        <title>A tissue-specific atlas of mouse protein phosphorylation and expression.</title>
        <authorList>
            <person name="Huttlin E.L."/>
            <person name="Jedrychowski M.P."/>
            <person name="Elias J.E."/>
            <person name="Goswami T."/>
            <person name="Rad R."/>
            <person name="Beausoleil S.A."/>
            <person name="Villen J."/>
            <person name="Haas W."/>
            <person name="Sowa M.E."/>
            <person name="Gygi S.P."/>
        </authorList>
    </citation>
    <scope>PHOSPHORYLATION [LARGE SCALE ANALYSIS] AT SER-163 AND THR-180</scope>
    <scope>IDENTIFICATION BY MASS SPECTROMETRY [LARGE SCALE ANALYSIS]</scope>
    <source>
        <tissue>Brain</tissue>
        <tissue>Brown adipose tissue</tissue>
        <tissue>Heart</tissue>
        <tissue>Kidney</tissue>
        <tissue>Liver</tissue>
        <tissue>Lung</tissue>
        <tissue>Pancreas</tissue>
        <tissue>Spleen</tissue>
        <tissue>Testis</tissue>
    </source>
</reference>
<reference key="10">
    <citation type="journal article" date="2014" name="Mol. Cell. Proteomics">
        <title>Immunoaffinity enrichment and mass spectrometry analysis of protein methylation.</title>
        <authorList>
            <person name="Guo A."/>
            <person name="Gu H."/>
            <person name="Zhou J."/>
            <person name="Mulhern D."/>
            <person name="Wang Y."/>
            <person name="Lee K.A."/>
            <person name="Yang V."/>
            <person name="Aguiar M."/>
            <person name="Kornhauser J."/>
            <person name="Jia X."/>
            <person name="Ren J."/>
            <person name="Beausoleil S.A."/>
            <person name="Silva J.C."/>
            <person name="Vemulapalli V."/>
            <person name="Bedford M.T."/>
            <person name="Comb M.J."/>
        </authorList>
    </citation>
    <scope>METHYLATION [LARGE SCALE ANALYSIS] AT ARG-182</scope>
    <scope>IDENTIFICATION BY MASS SPECTROMETRY [LARGE SCALE ANALYSIS]</scope>
    <source>
        <tissue>Brain</tissue>
        <tissue>Embryo</tissue>
    </source>
</reference>
<keyword id="KW-0007">Acetylation</keyword>
<keyword id="KW-0903">Direct protein sequencing</keyword>
<keyword id="KW-1017">Isopeptide bond</keyword>
<keyword id="KW-0488">Methylation</keyword>
<keyword id="KW-0597">Phosphoprotein</keyword>
<keyword id="KW-1185">Reference proteome</keyword>
<keyword id="KW-0832">Ubl conjugation</keyword>